<organism evidence="6">
    <name type="scientific">Catharanthus roseus</name>
    <name type="common">Madagascar periwinkle</name>
    <name type="synonym">Vinca rosea</name>
    <dbReference type="NCBI Taxonomy" id="4058"/>
    <lineage>
        <taxon>Eukaryota</taxon>
        <taxon>Viridiplantae</taxon>
        <taxon>Streptophyta</taxon>
        <taxon>Embryophyta</taxon>
        <taxon>Tracheophyta</taxon>
        <taxon>Spermatophyta</taxon>
        <taxon>Magnoliopsida</taxon>
        <taxon>eudicotyledons</taxon>
        <taxon>Gunneridae</taxon>
        <taxon>Pentapetalae</taxon>
        <taxon>asterids</taxon>
        <taxon>lamiids</taxon>
        <taxon>Gentianales</taxon>
        <taxon>Apocynaceae</taxon>
        <taxon>Rauvolfioideae</taxon>
        <taxon>Vinceae</taxon>
        <taxon>Catharanthinae</taxon>
        <taxon>Catharanthus</taxon>
    </lineage>
</organism>
<accession>U5HKE8</accession>
<comment type="function">
    <text evidence="3">Involved in the foliar biosynthesis of vindoline, a precursor of vinblastine and vincristine (PubMed:24108213). Hydroxylates specifically tabersonine, 2,3-dihydrotabersonine and 2,3-dihydro-3-hydroxytabersonine, but has no activity with naringenin, tryptamine, secologanin, strictosidine, ajmalicine, vindoline and catharanthine (PubMed:24108213).</text>
</comment>
<comment type="catalytic activity">
    <reaction evidence="3">
        <text>(-)-tabersonine + reduced [NADPH--hemoprotein reductase] + O2 = 16-hydroxytabersonine + oxidized [NADPH--hemoprotein reductase] + H2O + H(+)</text>
        <dbReference type="Rhea" id="RHEA:14133"/>
        <dbReference type="Rhea" id="RHEA-COMP:11964"/>
        <dbReference type="Rhea" id="RHEA-COMP:11965"/>
        <dbReference type="ChEBI" id="CHEBI:15377"/>
        <dbReference type="ChEBI" id="CHEBI:15378"/>
        <dbReference type="ChEBI" id="CHEBI:15379"/>
        <dbReference type="ChEBI" id="CHEBI:57618"/>
        <dbReference type="ChEBI" id="CHEBI:57893"/>
        <dbReference type="ChEBI" id="CHEBI:58210"/>
        <dbReference type="ChEBI" id="CHEBI:58239"/>
        <dbReference type="EC" id="1.14.14.103"/>
    </reaction>
</comment>
<comment type="cofactor">
    <cofactor evidence="1">
        <name>heme</name>
        <dbReference type="ChEBI" id="CHEBI:30413"/>
    </cofactor>
</comment>
<comment type="biophysicochemical properties">
    <kinetics>
        <KM evidence="3">70 nM for tabersonine</KM>
    </kinetics>
</comment>
<comment type="subcellular location">
    <subcellularLocation>
        <location evidence="3">Endoplasmic reticulum membrane</location>
        <topology evidence="2">Single-pass membrane protein</topology>
    </subcellularLocation>
</comment>
<comment type="tissue specificity">
    <text evidence="3">Expressed at low levels in roots, fruits, stems, flower buds and flowers, but highly expressed in young leaves. Detected in adaxial and abaxial epidermis cells.</text>
</comment>
<comment type="induction">
    <text evidence="3">Not regulated by methyl jasmonate treatment.</text>
</comment>
<comment type="miscellaneous">
    <text evidence="3">Tabersonine 16-hydroxylation is orchestrated in an organ-dependent manner by two genes including CYP71D351, which encodes the T16H2 isoform acting in the foliar vindoline biosynthesis, and CYP71D12, which encodes the T16H1 isoform acting in the flower vindoline biosynthesis.</text>
</comment>
<comment type="similarity">
    <text evidence="5">Belongs to the cytochrome P450 family.</text>
</comment>
<sequence>MELYYFSTFAFLLFCFILAKTLKKSGQSNLKLPLGPPPIPILGNAHQLIGGHTHHILRDLAKKYGPLMHLKTGEVSTIVASSPEIAEEMFKTHDVLFADRPSNIVAFKILSYDYSDVVISPYGNYWRQLRKISMMELFSQRSVQSFRSIREEEVLNFIKSIGSREGTKINLSKEISLLIYGITTRAAFGEKNKNTEEFIRLLDQLTVAVAEPNIADMFPSINFLKLISRSKYKIEKIHKNFDAIVQTILNHHKDRLANHKSSSHEENGEQNKDLVDVLLNIQQRGDFDTPLGDRSVKAVIFNIFSAGTETSSTTVDWAMCEMIKNPTIMKKAQEEVRKVYNEEGNVNETKLHQLKYLKAVIKETLRLHPPVPLLLPRECREQCEIKGYTIPSKSRVIVNAWAIGRDPNYWIEPENFNPERFLESEVDFKGNSFEYLPFGGGRRICPGITFALANIELPLAQLLFHFDWKLASDETNIDKLDMTESRGVTVRREDDLCLIPFPYSASSLKGKY</sequence>
<protein>
    <recommendedName>
        <fullName evidence="4">Tabersonine 16-hydroxylase 2</fullName>
        <ecNumber evidence="3">1.14.14.103</ecNumber>
    </recommendedName>
    <alternativeName>
        <fullName evidence="4">Cytochrome P450 71D351</fullName>
    </alternativeName>
</protein>
<keyword id="KW-0017">Alkaloid metabolism</keyword>
<keyword id="KW-0256">Endoplasmic reticulum</keyword>
<keyword id="KW-0349">Heme</keyword>
<keyword id="KW-0408">Iron</keyword>
<keyword id="KW-0472">Membrane</keyword>
<keyword id="KW-0479">Metal-binding</keyword>
<keyword id="KW-0503">Monooxygenase</keyword>
<keyword id="KW-0560">Oxidoreductase</keyword>
<keyword id="KW-0812">Transmembrane</keyword>
<keyword id="KW-1133">Transmembrane helix</keyword>
<gene>
    <name evidence="4" type="primary">CYP71D351</name>
    <name evidence="4" type="synonym">T16H2</name>
</gene>
<evidence type="ECO:0000250" key="1">
    <source>
        <dbReference type="UniProtKB" id="Q96242"/>
    </source>
</evidence>
<evidence type="ECO:0000255" key="2"/>
<evidence type="ECO:0000269" key="3">
    <source>
    </source>
</evidence>
<evidence type="ECO:0000303" key="4">
    <source>
    </source>
</evidence>
<evidence type="ECO:0000305" key="5"/>
<evidence type="ECO:0000312" key="6">
    <source>
        <dbReference type="EMBL" id="AEB69788.1"/>
    </source>
</evidence>
<name>C71DZ_CATRO</name>
<reference key="1">
    <citation type="journal article" date="2013" name="Plant Physiol.">
        <title>A pair of tabersonine 16-hydroxylases initiates the synthesis of vindoline in an organ-dependent manner in Catharanthus roseus.</title>
        <authorList>
            <person name="Besseau S."/>
            <person name="Kellner F."/>
            <person name="Lanoue A."/>
            <person name="Thamm A.M."/>
            <person name="Salim V."/>
            <person name="Schneider B."/>
            <person name="Geu-Flores F."/>
            <person name="Hoefer R."/>
            <person name="Guirimand G."/>
            <person name="Guihur A."/>
            <person name="Oudin A."/>
            <person name="Glevarec G."/>
            <person name="Foureau E."/>
            <person name="Papon N."/>
            <person name="Clastre M."/>
            <person name="Giglioli-Guivarc'h N."/>
            <person name="St-Pierre B."/>
            <person name="Werck-Reichhart D."/>
            <person name="Burlat V."/>
            <person name="De Luca V."/>
            <person name="O'Connor S.E."/>
            <person name="Courdavault V."/>
        </authorList>
    </citation>
    <scope>NUCLEOTIDE SEQUENCE [MRNA]</scope>
    <scope>FUNCTION</scope>
    <scope>CATALYTIC ACTIVITY</scope>
    <scope>BIOPHYSICOCHEMICAL PROPERTIES</scope>
    <scope>SUBSTRATE SPECIFICITY</scope>
    <scope>LACK OF INDUCTION BY METHYL JASMONATE</scope>
    <scope>TISSUE SPECIFICITY</scope>
</reference>
<dbReference type="EC" id="1.14.14.103" evidence="3"/>
<dbReference type="EMBL" id="JF742645">
    <property type="protein sequence ID" value="AEB69788.1"/>
    <property type="molecule type" value="mRNA"/>
</dbReference>
<dbReference type="SMR" id="U5HKE8"/>
<dbReference type="SABIO-RK" id="U5HKE8"/>
<dbReference type="GO" id="GO:0005789">
    <property type="term" value="C:endoplasmic reticulum membrane"/>
    <property type="evidence" value="ECO:0007669"/>
    <property type="project" value="UniProtKB-SubCell"/>
</dbReference>
<dbReference type="GO" id="GO:0020037">
    <property type="term" value="F:heme binding"/>
    <property type="evidence" value="ECO:0007669"/>
    <property type="project" value="InterPro"/>
</dbReference>
<dbReference type="GO" id="GO:0005506">
    <property type="term" value="F:iron ion binding"/>
    <property type="evidence" value="ECO:0007669"/>
    <property type="project" value="InterPro"/>
</dbReference>
<dbReference type="GO" id="GO:0050594">
    <property type="term" value="F:tabersonine 16-hydroxylase activity"/>
    <property type="evidence" value="ECO:0007669"/>
    <property type="project" value="UniProtKB-EC"/>
</dbReference>
<dbReference type="GO" id="GO:0009820">
    <property type="term" value="P:alkaloid metabolic process"/>
    <property type="evidence" value="ECO:0007669"/>
    <property type="project" value="UniProtKB-KW"/>
</dbReference>
<dbReference type="CDD" id="cd11072">
    <property type="entry name" value="CYP71-like"/>
    <property type="match status" value="1"/>
</dbReference>
<dbReference type="FunFam" id="1.10.630.10:FF:000043">
    <property type="entry name" value="Cytochrome P450 99A2"/>
    <property type="match status" value="1"/>
</dbReference>
<dbReference type="Gene3D" id="1.10.630.10">
    <property type="entry name" value="Cytochrome P450"/>
    <property type="match status" value="1"/>
</dbReference>
<dbReference type="InterPro" id="IPR052306">
    <property type="entry name" value="CYP450_71D"/>
</dbReference>
<dbReference type="InterPro" id="IPR001128">
    <property type="entry name" value="Cyt_P450"/>
</dbReference>
<dbReference type="InterPro" id="IPR017972">
    <property type="entry name" value="Cyt_P450_CS"/>
</dbReference>
<dbReference type="InterPro" id="IPR002401">
    <property type="entry name" value="Cyt_P450_E_grp-I"/>
</dbReference>
<dbReference type="InterPro" id="IPR036396">
    <property type="entry name" value="Cyt_P450_sf"/>
</dbReference>
<dbReference type="PANTHER" id="PTHR47953:SF19">
    <property type="entry name" value="OS06G0641600 PROTEIN"/>
    <property type="match status" value="1"/>
</dbReference>
<dbReference type="PANTHER" id="PTHR47953">
    <property type="entry name" value="OS08G0105600 PROTEIN"/>
    <property type="match status" value="1"/>
</dbReference>
<dbReference type="Pfam" id="PF00067">
    <property type="entry name" value="p450"/>
    <property type="match status" value="1"/>
</dbReference>
<dbReference type="PRINTS" id="PR00463">
    <property type="entry name" value="EP450I"/>
</dbReference>
<dbReference type="PRINTS" id="PR00385">
    <property type="entry name" value="P450"/>
</dbReference>
<dbReference type="SUPFAM" id="SSF48264">
    <property type="entry name" value="Cytochrome P450"/>
    <property type="match status" value="1"/>
</dbReference>
<dbReference type="PROSITE" id="PS00086">
    <property type="entry name" value="CYTOCHROME_P450"/>
    <property type="match status" value="1"/>
</dbReference>
<feature type="chain" id="PRO_5004661923" description="Tabersonine 16-hydroxylase 2">
    <location>
        <begin position="1"/>
        <end position="512"/>
    </location>
</feature>
<feature type="topological domain" description="Lumenal" evidence="5">
    <location>
        <position position="1"/>
    </location>
</feature>
<feature type="transmembrane region" description="Helical" evidence="2">
    <location>
        <begin position="2"/>
        <end position="22"/>
    </location>
</feature>
<feature type="topological domain" description="Cytoplasmic" evidence="5">
    <location>
        <begin position="23"/>
        <end position="512"/>
    </location>
</feature>
<feature type="binding site" description="axial binding residue" evidence="1">
    <location>
        <position position="445"/>
    </location>
    <ligand>
        <name>heme</name>
        <dbReference type="ChEBI" id="CHEBI:30413"/>
    </ligand>
    <ligandPart>
        <name>Fe</name>
        <dbReference type="ChEBI" id="CHEBI:18248"/>
    </ligandPart>
</feature>
<proteinExistence type="evidence at protein level"/>